<feature type="chain" id="PRO_0000360292" description="NAD(P)H-quinone oxidoreductase subunit 6, chloroplastic">
    <location>
        <begin position="1"/>
        <end position="176"/>
    </location>
</feature>
<feature type="transmembrane region" description="Helical" evidence="2">
    <location>
        <begin position="10"/>
        <end position="30"/>
    </location>
</feature>
<feature type="transmembrane region" description="Helical" evidence="2">
    <location>
        <begin position="33"/>
        <end position="53"/>
    </location>
</feature>
<feature type="transmembrane region" description="Helical" evidence="2">
    <location>
        <begin position="60"/>
        <end position="80"/>
    </location>
</feature>
<feature type="transmembrane region" description="Helical" evidence="2">
    <location>
        <begin position="95"/>
        <end position="115"/>
    </location>
</feature>
<feature type="transmembrane region" description="Helical" evidence="2">
    <location>
        <begin position="152"/>
        <end position="172"/>
    </location>
</feature>
<sequence>MDLPGPIHEILVLFGGFVLLLGGLGVVLLTNPIYSAFSLGLVLVCISLFYFLLNSYFVAVAQLLIYVGAINVLIIFAVMFVNGSEWSKDKNYWTIGDGFTLLLCITIPFSLMTTIPDTSWYGILWTTRSNQIVEQGLINNVQQIGIHLATDFYLPFELISLILLVSLIGAITMARQ</sequence>
<dbReference type="EC" id="7.1.1.-"/>
<dbReference type="EMBL" id="EF115542">
    <property type="protein sequence ID" value="ABK79549.1"/>
    <property type="molecule type" value="Genomic_DNA"/>
</dbReference>
<dbReference type="RefSeq" id="YP_899460.1">
    <property type="nucleotide sequence ID" value="NC_008602.1"/>
</dbReference>
<dbReference type="SMR" id="A1E9X7"/>
<dbReference type="FunCoup" id="A1E9X7">
    <property type="interactions" value="15"/>
</dbReference>
<dbReference type="STRING" id="4558.A1E9X7"/>
<dbReference type="GeneID" id="4549155"/>
<dbReference type="KEGG" id="sbi:4549155"/>
<dbReference type="InParanoid" id="A1E9X7"/>
<dbReference type="OrthoDB" id="655704at2759"/>
<dbReference type="Proteomes" id="UP000000768">
    <property type="component" value="Chloroplast"/>
</dbReference>
<dbReference type="GO" id="GO:0009535">
    <property type="term" value="C:chloroplast thylakoid membrane"/>
    <property type="evidence" value="ECO:0007669"/>
    <property type="project" value="UniProtKB-SubCell"/>
</dbReference>
<dbReference type="GO" id="GO:0008137">
    <property type="term" value="F:NADH dehydrogenase (ubiquinone) activity"/>
    <property type="evidence" value="ECO:0007669"/>
    <property type="project" value="InterPro"/>
</dbReference>
<dbReference type="GO" id="GO:0048038">
    <property type="term" value="F:quinone binding"/>
    <property type="evidence" value="ECO:0007669"/>
    <property type="project" value="UniProtKB-KW"/>
</dbReference>
<dbReference type="FunFam" id="1.20.120.1200:FF:000002">
    <property type="entry name" value="NAD(P)H-quinone oxidoreductase subunit 6, chloroplastic"/>
    <property type="match status" value="1"/>
</dbReference>
<dbReference type="Gene3D" id="1.20.120.1200">
    <property type="entry name" value="NADH-ubiquinone/plastoquinone oxidoreductase chain 6, subunit NuoJ"/>
    <property type="match status" value="1"/>
</dbReference>
<dbReference type="InterPro" id="IPR050290">
    <property type="entry name" value="NAD(P)H-Q_Oxidoreduct_6"/>
</dbReference>
<dbReference type="InterPro" id="IPR001457">
    <property type="entry name" value="NADH_UbQ/plastoQ_OxRdtase_su6"/>
</dbReference>
<dbReference type="InterPro" id="IPR042106">
    <property type="entry name" value="Nuo/plastoQ_OxRdtase_6_NuoJ"/>
</dbReference>
<dbReference type="PANTHER" id="PTHR48479">
    <property type="entry name" value="NAD(P)H-QUINONE OXIDOREDUCTASE SUBUNIT 6, CHLOROPLASTIC"/>
    <property type="match status" value="1"/>
</dbReference>
<dbReference type="PANTHER" id="PTHR48479:SF1">
    <property type="entry name" value="NAD(P)H-QUINONE OXIDOREDUCTASE SUBUNIT 6, CHLOROPLASTIC"/>
    <property type="match status" value="1"/>
</dbReference>
<dbReference type="Pfam" id="PF00499">
    <property type="entry name" value="Oxidored_q3"/>
    <property type="match status" value="1"/>
</dbReference>
<accession>A1E9X7</accession>
<proteinExistence type="inferred from homology"/>
<comment type="function">
    <text evidence="1">NDH shuttles electrons from NAD(P)H:plastoquinone, via FMN and iron-sulfur (Fe-S) centers, to quinones in the photosynthetic chain and possibly in a chloroplast respiratory chain. The immediate electron acceptor for the enzyme in this species is believed to be plastoquinone. Couples the redox reaction to proton translocation, and thus conserves the redox energy in a proton gradient (By similarity).</text>
</comment>
<comment type="catalytic activity">
    <reaction>
        <text>a plastoquinone + NADH + (n+1) H(+)(in) = a plastoquinol + NAD(+) + n H(+)(out)</text>
        <dbReference type="Rhea" id="RHEA:42608"/>
        <dbReference type="Rhea" id="RHEA-COMP:9561"/>
        <dbReference type="Rhea" id="RHEA-COMP:9562"/>
        <dbReference type="ChEBI" id="CHEBI:15378"/>
        <dbReference type="ChEBI" id="CHEBI:17757"/>
        <dbReference type="ChEBI" id="CHEBI:57540"/>
        <dbReference type="ChEBI" id="CHEBI:57945"/>
        <dbReference type="ChEBI" id="CHEBI:62192"/>
    </reaction>
</comment>
<comment type="catalytic activity">
    <reaction>
        <text>a plastoquinone + NADPH + (n+1) H(+)(in) = a plastoquinol + NADP(+) + n H(+)(out)</text>
        <dbReference type="Rhea" id="RHEA:42612"/>
        <dbReference type="Rhea" id="RHEA-COMP:9561"/>
        <dbReference type="Rhea" id="RHEA-COMP:9562"/>
        <dbReference type="ChEBI" id="CHEBI:15378"/>
        <dbReference type="ChEBI" id="CHEBI:17757"/>
        <dbReference type="ChEBI" id="CHEBI:57783"/>
        <dbReference type="ChEBI" id="CHEBI:58349"/>
        <dbReference type="ChEBI" id="CHEBI:62192"/>
    </reaction>
</comment>
<comment type="subunit">
    <text evidence="1">NDH is composed of at least 16 different subunits, 5 of which are encoded in the nucleus.</text>
</comment>
<comment type="subcellular location">
    <subcellularLocation>
        <location evidence="1">Plastid</location>
        <location evidence="1">Chloroplast thylakoid membrane</location>
        <topology evidence="1">Multi-pass membrane protein</topology>
    </subcellularLocation>
</comment>
<comment type="similarity">
    <text evidence="3">Belongs to the complex I subunit 6 family.</text>
</comment>
<keyword id="KW-0150">Chloroplast</keyword>
<keyword id="KW-0472">Membrane</keyword>
<keyword id="KW-0520">NAD</keyword>
<keyword id="KW-0521">NADP</keyword>
<keyword id="KW-0934">Plastid</keyword>
<keyword id="KW-0618">Plastoquinone</keyword>
<keyword id="KW-0874">Quinone</keyword>
<keyword id="KW-1185">Reference proteome</keyword>
<keyword id="KW-0793">Thylakoid</keyword>
<keyword id="KW-1278">Translocase</keyword>
<keyword id="KW-0812">Transmembrane</keyword>
<keyword id="KW-1133">Transmembrane helix</keyword>
<keyword id="KW-0813">Transport</keyword>
<organism>
    <name type="scientific">Sorghum bicolor</name>
    <name type="common">Sorghum</name>
    <name type="synonym">Sorghum vulgare</name>
    <dbReference type="NCBI Taxonomy" id="4558"/>
    <lineage>
        <taxon>Eukaryota</taxon>
        <taxon>Viridiplantae</taxon>
        <taxon>Streptophyta</taxon>
        <taxon>Embryophyta</taxon>
        <taxon>Tracheophyta</taxon>
        <taxon>Spermatophyta</taxon>
        <taxon>Magnoliopsida</taxon>
        <taxon>Liliopsida</taxon>
        <taxon>Poales</taxon>
        <taxon>Poaceae</taxon>
        <taxon>PACMAD clade</taxon>
        <taxon>Panicoideae</taxon>
        <taxon>Andropogonodae</taxon>
        <taxon>Andropogoneae</taxon>
        <taxon>Sorghinae</taxon>
        <taxon>Sorghum</taxon>
    </lineage>
</organism>
<gene>
    <name type="primary">ndhG</name>
</gene>
<reference key="1">
    <citation type="journal article" date="2007" name="Theor. Appl. Genet.">
        <title>Complete chloroplast genome sequences of Hordeum vulgare, Sorghum bicolor and Agrostis stolonifera, and comparative analyses with other grass genomes.</title>
        <authorList>
            <person name="Saski C."/>
            <person name="Lee S.-B."/>
            <person name="Fjellheim S."/>
            <person name="Guda C."/>
            <person name="Jansen R.K."/>
            <person name="Luo H."/>
            <person name="Tomkins J."/>
            <person name="Rognli O.A."/>
            <person name="Daniell H."/>
            <person name="Clarke J.L."/>
        </authorList>
    </citation>
    <scope>NUCLEOTIDE SEQUENCE [LARGE SCALE GENOMIC DNA]</scope>
    <source>
        <strain>cv. BTx623</strain>
    </source>
</reference>
<protein>
    <recommendedName>
        <fullName>NAD(P)H-quinone oxidoreductase subunit 6, chloroplastic</fullName>
        <ecNumber>7.1.1.-</ecNumber>
    </recommendedName>
    <alternativeName>
        <fullName>NAD(P)H dehydrogenase subunit 6</fullName>
    </alternativeName>
    <alternativeName>
        <fullName>NADH-plastoquinone oxidoreductase subunit 6</fullName>
    </alternativeName>
</protein>
<evidence type="ECO:0000250" key="1"/>
<evidence type="ECO:0000255" key="2"/>
<evidence type="ECO:0000305" key="3"/>
<name>NU6C_SORBI</name>
<geneLocation type="chloroplast"/>